<feature type="chain" id="PRO_0000165076" description="Uncharacterized 8.1 kDa protein in rIIA-Gp60 intergenic region">
    <location>
        <begin position="1"/>
        <end position="67"/>
    </location>
</feature>
<sequence length="67" mass="8129">MKSYKVNLELFDKAVHREYRIIQRFFDMGEAEEFKTRFKDIRDKIQSDTATKDELLEVAEVIKRNMN</sequence>
<organism>
    <name type="scientific">Enterobacteria phage T4</name>
    <name type="common">Bacteriophage T4</name>
    <dbReference type="NCBI Taxonomy" id="10665"/>
    <lineage>
        <taxon>Viruses</taxon>
        <taxon>Duplodnaviria</taxon>
        <taxon>Heunggongvirae</taxon>
        <taxon>Uroviricota</taxon>
        <taxon>Caudoviricetes</taxon>
        <taxon>Straboviridae</taxon>
        <taxon>Tevenvirinae</taxon>
        <taxon>Tequatrovirus</taxon>
    </lineage>
</organism>
<keyword id="KW-1185">Reference proteome</keyword>
<name>Y00A_BPT4</name>
<protein>
    <recommendedName>
        <fullName>Uncharacterized 8.1 kDa protein in rIIA-Gp60 intergenic region</fullName>
    </recommendedName>
</protein>
<dbReference type="EMBL" id="X52686">
    <property type="protein sequence ID" value="CAA36910.1"/>
    <property type="molecule type" value="Genomic_DNA"/>
</dbReference>
<dbReference type="EMBL" id="AF158101">
    <property type="protein sequence ID" value="AAD42648.1"/>
    <property type="molecule type" value="Genomic_DNA"/>
</dbReference>
<dbReference type="PIR" id="JU0399">
    <property type="entry name" value="JU0399"/>
</dbReference>
<dbReference type="RefSeq" id="NP_049617.1">
    <property type="nucleotide sequence ID" value="NC_000866.4"/>
</dbReference>
<dbReference type="SMR" id="P25186"/>
<dbReference type="GeneID" id="1258774"/>
<dbReference type="KEGG" id="vg:1258774"/>
<dbReference type="OrthoDB" id="22522at10239"/>
<dbReference type="Proteomes" id="UP000009087">
    <property type="component" value="Segment"/>
</dbReference>
<dbReference type="InterPro" id="IPR056959">
    <property type="entry name" value="RIIA1-like"/>
</dbReference>
<dbReference type="Pfam" id="PF24210">
    <property type="entry name" value="T4_RIIA1"/>
    <property type="match status" value="1"/>
</dbReference>
<organismHost>
    <name type="scientific">Escherichia coli</name>
    <dbReference type="NCBI Taxonomy" id="562"/>
</organismHost>
<accession>P25186</accession>
<proteinExistence type="predicted"/>
<reference key="1">
    <citation type="journal article" date="1990" name="Genetics">
        <title>The rIIA gene of bacteriophage T4. I. Its DNA sequence and discovery of a new open reading frame between genes 60 and rIIA.</title>
        <authorList>
            <person name="Daegelen P."/>
            <person name="Brody E."/>
        </authorList>
    </citation>
    <scope>NUCLEOTIDE SEQUENCE [GENOMIC DNA]</scope>
</reference>
<reference key="2">
    <citation type="journal article" date="2003" name="Microbiol. Mol. Biol. Rev.">
        <title>Bacteriophage T4 genome.</title>
        <authorList>
            <person name="Miller E.S."/>
            <person name="Kutter E."/>
            <person name="Mosig G."/>
            <person name="Arisaka F."/>
            <person name="Kunisawa T."/>
            <person name="Ruger W."/>
        </authorList>
    </citation>
    <scope>NUCLEOTIDE SEQUENCE [LARGE SCALE GENOMIC DNA]</scope>
</reference>
<gene>
    <name type="primary">y00A</name>
    <name type="synonym">rIIA.1</name>
</gene>